<reference key="1">
    <citation type="journal article" date="2008" name="Curr. Biol.">
        <title>Chromatophore genome sequence of Paulinella sheds light on acquisition of photosynthesis by eukaryotes.</title>
        <authorList>
            <person name="Nowack E.C.M."/>
            <person name="Melkonian M."/>
            <person name="Gloeckner G."/>
        </authorList>
    </citation>
    <scope>NUCLEOTIDE SEQUENCE [LARGE SCALE GENOMIC DNA]</scope>
</reference>
<proteinExistence type="inferred from homology"/>
<dbReference type="EC" id="7.1.1.-" evidence="2"/>
<dbReference type="EMBL" id="CP000815">
    <property type="protein sequence ID" value="ACB43028.1"/>
    <property type="molecule type" value="Genomic_DNA"/>
</dbReference>
<dbReference type="RefSeq" id="YP_002049238.1">
    <property type="nucleotide sequence ID" value="NC_011087.1"/>
</dbReference>
<dbReference type="SMR" id="B1X509"/>
<dbReference type="GeneID" id="6481219"/>
<dbReference type="GO" id="GO:0070118">
    <property type="term" value="C:organellar chromatophore thylakoid membrane"/>
    <property type="evidence" value="ECO:0007669"/>
    <property type="project" value="UniProtKB-SubCell"/>
</dbReference>
<dbReference type="GO" id="GO:0009536">
    <property type="term" value="C:plastid"/>
    <property type="evidence" value="ECO:0007669"/>
    <property type="project" value="UniProtKB-KW"/>
</dbReference>
<dbReference type="GO" id="GO:0016655">
    <property type="term" value="F:oxidoreductase activity, acting on NAD(P)H, quinone or similar compound as acceptor"/>
    <property type="evidence" value="ECO:0007669"/>
    <property type="project" value="UniProtKB-UniRule"/>
</dbReference>
<dbReference type="GO" id="GO:0048038">
    <property type="term" value="F:quinone binding"/>
    <property type="evidence" value="ECO:0007669"/>
    <property type="project" value="UniProtKB-KW"/>
</dbReference>
<dbReference type="HAMAP" id="MF_01353">
    <property type="entry name" value="NDH1_NDH1N"/>
    <property type="match status" value="1"/>
</dbReference>
<dbReference type="InterPro" id="IPR020874">
    <property type="entry name" value="NAD(P)H-quinone_OxRdtase_su_N"/>
</dbReference>
<dbReference type="PANTHER" id="PTHR35515">
    <property type="entry name" value="NAD(P)H-QUINONE OXIDOREDUCTASE SUBUNIT N, CHLOROPLASTIC"/>
    <property type="match status" value="1"/>
</dbReference>
<dbReference type="PANTHER" id="PTHR35515:SF1">
    <property type="entry name" value="NAD(P)H-QUINONE OXIDOREDUCTASE SUBUNIT N, CHLOROPLASTIC"/>
    <property type="match status" value="1"/>
</dbReference>
<dbReference type="Pfam" id="PF11909">
    <property type="entry name" value="NdhN"/>
    <property type="match status" value="1"/>
</dbReference>
<gene>
    <name evidence="2" type="primary">ndhN</name>
    <name type="ORF">PCC_0598</name>
</gene>
<feature type="chain" id="PRO_0000352245" description="NAD(P)H-quinone oxidoreductase subunit N, organellar chromatophore">
    <location>
        <begin position="1"/>
        <end position="158"/>
    </location>
</feature>
<organism>
    <name type="scientific">Paulinella chromatophora</name>
    <dbReference type="NCBI Taxonomy" id="39717"/>
    <lineage>
        <taxon>Eukaryota</taxon>
        <taxon>Sar</taxon>
        <taxon>Rhizaria</taxon>
        <taxon>Cercozoa</taxon>
        <taxon>Imbricatea</taxon>
        <taxon>Silicofilosea</taxon>
        <taxon>Euglyphida</taxon>
        <taxon>Paulinellidae</taxon>
        <taxon>Paulinella</taxon>
    </lineage>
</organism>
<evidence type="ECO:0000250" key="1"/>
<evidence type="ECO:0000255" key="2">
    <source>
        <dbReference type="HAMAP-Rule" id="MF_01353"/>
    </source>
</evidence>
<geneLocation type="organellar chromatophore"/>
<name>NDHN_PAUCH</name>
<keyword id="KW-0472">Membrane</keyword>
<keyword id="KW-0520">NAD</keyword>
<keyword id="KW-0521">NADP</keyword>
<keyword id="KW-0994">Organellar chromatophore</keyword>
<keyword id="KW-0934">Plastid</keyword>
<keyword id="KW-0618">Plastoquinone</keyword>
<keyword id="KW-0874">Quinone</keyword>
<keyword id="KW-0793">Thylakoid</keyword>
<keyword id="KW-1278">Translocase</keyword>
<comment type="function">
    <text evidence="1">NDH-1 shuttles electrons from an unknown electron donor, via FMN and iron-sulfur (Fe-S) centers, to quinones in the respiratory and/or the photosynthetic chain. The immediate electron acceptor for the enzyme in this species is believed to be plastoquinone. Couples the redox reaction to proton translocation, and thus conserves the redox energy in a proton gradient (By similarity).</text>
</comment>
<comment type="catalytic activity">
    <reaction evidence="2">
        <text>a plastoquinone + NADH + (n+1) H(+)(in) = a plastoquinol + NAD(+) + n H(+)(out)</text>
        <dbReference type="Rhea" id="RHEA:42608"/>
        <dbReference type="Rhea" id="RHEA-COMP:9561"/>
        <dbReference type="Rhea" id="RHEA-COMP:9562"/>
        <dbReference type="ChEBI" id="CHEBI:15378"/>
        <dbReference type="ChEBI" id="CHEBI:17757"/>
        <dbReference type="ChEBI" id="CHEBI:57540"/>
        <dbReference type="ChEBI" id="CHEBI:57945"/>
        <dbReference type="ChEBI" id="CHEBI:62192"/>
    </reaction>
</comment>
<comment type="catalytic activity">
    <reaction evidence="2">
        <text>a plastoquinone + NADPH + (n+1) H(+)(in) = a plastoquinol + NADP(+) + n H(+)(out)</text>
        <dbReference type="Rhea" id="RHEA:42612"/>
        <dbReference type="Rhea" id="RHEA-COMP:9561"/>
        <dbReference type="Rhea" id="RHEA-COMP:9562"/>
        <dbReference type="ChEBI" id="CHEBI:15378"/>
        <dbReference type="ChEBI" id="CHEBI:17757"/>
        <dbReference type="ChEBI" id="CHEBI:57783"/>
        <dbReference type="ChEBI" id="CHEBI:58349"/>
        <dbReference type="ChEBI" id="CHEBI:62192"/>
    </reaction>
</comment>
<comment type="subunit">
    <text evidence="2">NDH-1 can be composed of about 15 different subunits; different subcomplexes with different compositions have been identified which probably have different functions.</text>
</comment>
<comment type="subcellular location">
    <subcellularLocation>
        <location evidence="1">Plastid</location>
        <location evidence="1">Organellar chromatophore thylakoid membrane</location>
        <topology evidence="2">Peripheral membrane protein</topology>
        <orientation evidence="2">Cytoplasmic side</orientation>
    </subcellularLocation>
</comment>
<comment type="similarity">
    <text evidence="2">Belongs to the complex I NdhN subunit family.</text>
</comment>
<accession>B1X509</accession>
<sequence length="158" mass="17483">MPLLLTGQEFRRDLERDGALALFVPLEGGAETRLMRRLRAVGYKAYLTSAKGLGDPEAYLLKLHEQHVPHLGRRMSTEGKPEGKSVGHVPKVMPMLGPLLEGKSPILLWLLEGQVLSSSELSAISNLPKREPRLKIVVEMGGARALRWESLGKLVESR</sequence>
<protein>
    <recommendedName>
        <fullName evidence="2">NAD(P)H-quinone oxidoreductase subunit N, organellar chromatophore</fullName>
        <ecNumber evidence="2">7.1.1.-</ecNumber>
    </recommendedName>
    <alternativeName>
        <fullName evidence="2">NAD(P)H dehydrogenase I subunit N</fullName>
        <shortName evidence="2">NDH-1 subunit N</shortName>
        <shortName evidence="2">NDH-N</shortName>
    </alternativeName>
</protein>